<keyword id="KW-0903">Direct protein sequencing</keyword>
<keyword id="KW-0426">Late protein</keyword>
<keyword id="KW-1185">Reference proteome</keyword>
<keyword id="KW-1226">Viral baseplate protein</keyword>
<keyword id="KW-1171">Viral genome ejection through host cell envelope</keyword>
<keyword id="KW-1162">Viral penetration into host cytoplasm</keyword>
<keyword id="KW-1188">Viral release from host cell</keyword>
<keyword id="KW-1245">Viral tail assembly</keyword>
<keyword id="KW-1227">Viral tail protein</keyword>
<keyword id="KW-0946">Virion</keyword>
<keyword id="KW-1160">Virus entry into host cell</keyword>
<dbReference type="EMBL" id="AY283928">
    <property type="protein sequence ID" value="AAQ64404.1"/>
    <property type="molecule type" value="Genomic_DNA"/>
</dbReference>
<dbReference type="RefSeq" id="NP_899581.1">
    <property type="nucleotide sequence ID" value="NC_005083.2"/>
</dbReference>
<dbReference type="GeneID" id="2545812"/>
<dbReference type="KEGG" id="vg:2545812"/>
<dbReference type="OrthoDB" id="2186at10239"/>
<dbReference type="Proteomes" id="UP000001785">
    <property type="component" value="Genome"/>
</dbReference>
<dbReference type="GO" id="GO:0098025">
    <property type="term" value="C:virus tail, baseplate"/>
    <property type="evidence" value="ECO:0007669"/>
    <property type="project" value="UniProtKB-KW"/>
</dbReference>
<dbReference type="GO" id="GO:0046718">
    <property type="term" value="P:symbiont entry into host cell"/>
    <property type="evidence" value="ECO:0007669"/>
    <property type="project" value="UniProtKB-KW"/>
</dbReference>
<dbReference type="GO" id="GO:0098003">
    <property type="term" value="P:viral tail assembly"/>
    <property type="evidence" value="ECO:0007669"/>
    <property type="project" value="UniProtKB-KW"/>
</dbReference>
<dbReference type="Gene3D" id="3.10.450.190">
    <property type="match status" value="1"/>
</dbReference>
<dbReference type="Gene3D" id="2.40.50.260">
    <property type="entry name" value="Nucleic acid-binding protein domain"/>
    <property type="match status" value="1"/>
</dbReference>
<dbReference type="InterPro" id="IPR009590">
    <property type="entry name" value="Gp5_OB_N"/>
</dbReference>
<dbReference type="InterPro" id="IPR054030">
    <property type="entry name" value="Gp5_Vgr_C"/>
</dbReference>
<dbReference type="Pfam" id="PF06714">
    <property type="entry name" value="Gp5_OB"/>
    <property type="match status" value="1"/>
</dbReference>
<dbReference type="Pfam" id="PF22178">
    <property type="entry name" value="Gp5_trimer_C"/>
    <property type="match status" value="1"/>
</dbReference>
<dbReference type="SUPFAM" id="SSF69255">
    <property type="entry name" value="gp5 N-terminal domain-like"/>
    <property type="match status" value="1"/>
</dbReference>
<dbReference type="SUPFAM" id="SSF69349">
    <property type="entry name" value="Phage fibre proteins"/>
    <property type="match status" value="2"/>
</dbReference>
<comment type="function">
    <text evidence="1">Tail-associated protein of the baseplate hub that is essential for viral DNA ejection. Involved in the tail assembly.</text>
</comment>
<comment type="subunit">
    <text evidence="2">Homotrimer. Interacts with gp27 trimer.</text>
</comment>
<comment type="subcellular location">
    <subcellularLocation>
        <location>Virion</location>
    </subcellularLocation>
    <text evidence="1">Present in 3 copies in the baseplate.</text>
</comment>
<proteinExistence type="evidence at protein level"/>
<organismHost>
    <name type="scientific">Vibrio parahaemolyticus</name>
    <dbReference type="NCBI Taxonomy" id="670"/>
</organismHost>
<accession>Q6WHG9</accession>
<reference key="1">
    <citation type="journal article" date="2003" name="J. Bacteriol.">
        <title>Complete genome sequence of the broad-host-range vibriophage KVP40: comparative genomics of a T4-related bacteriophage.</title>
        <authorList>
            <person name="Miller E.S."/>
            <person name="Heidelberg J.F."/>
            <person name="Eisen J.A."/>
            <person name="Nelson W.C."/>
            <person name="Durkin A.S."/>
            <person name="Ciecko A."/>
            <person name="Feldblyum T.V."/>
            <person name="White O."/>
            <person name="Paulsen I.T."/>
            <person name="Nierman W.C."/>
            <person name="Lee J."/>
            <person name="Szczypinski B."/>
            <person name="Fraser C.M."/>
        </authorList>
    </citation>
    <scope>NUCLEOTIDE SEQUENCE [GENOMIC DNA]</scope>
    <source>
        <strain evidence="5">Isolate Vibrio parahaemolyticus/Japan/Matsuzaki /1991</strain>
    </source>
</reference>
<reference key="2">
    <citation type="journal article" date="2008" name="J. Bacteriol.">
        <title>ORF334 in Vibrio phage KVP40 plays the role of gp27 in T4 phage to form a heterohexameric complex.</title>
        <authorList>
            <person name="Nemoto M."/>
            <person name="Mio K."/>
            <person name="Kanamaru S."/>
            <person name="Arisaka F."/>
        </authorList>
    </citation>
    <scope>PROTEIN SEQUENCE OF 1-7</scope>
    <scope>INTERACTION WITH GP27</scope>
    <scope>SUBUNIT</scope>
</reference>
<gene>
    <name evidence="4" type="primary">5</name>
    <name evidence="4" type="ORF">KVP40.0335</name>
</gene>
<evidence type="ECO:0000250" key="1">
    <source>
        <dbReference type="UniProtKB" id="P16009"/>
    </source>
</evidence>
<evidence type="ECO:0000269" key="2">
    <source>
    </source>
</evidence>
<evidence type="ECO:0000305" key="3"/>
<evidence type="ECO:0000312" key="4">
    <source>
        <dbReference type="EMBL" id="AAQ64404.1"/>
    </source>
</evidence>
<evidence type="ECO:0000312" key="5">
    <source>
        <dbReference type="Proteomes" id="UP000001785"/>
    </source>
</evidence>
<organism evidence="5">
    <name type="scientific">Vibrio phage KVP40 (isolate Vibrio parahaemolyticus/Japan/Matsuzaki/1991)</name>
    <name type="common">KVP40</name>
    <name type="synonym">Bacteriophage KVP40</name>
    <dbReference type="NCBI Taxonomy" id="75320"/>
    <lineage>
        <taxon>Viruses</taxon>
        <taxon>Duplodnaviria</taxon>
        <taxon>Heunggongvirae</taxon>
        <taxon>Uroviricota</taxon>
        <taxon>Caudoviricetes</taxon>
        <taxon>Straboviridae</taxon>
        <taxon>Schizotequatrovirus</taxon>
        <taxon>Schizotequatrovirus KVP40</taxon>
    </lineage>
</organism>
<name>NEEDL_BPKVM</name>
<feature type="chain" id="PRO_0000432930" description="Protein Gp5">
    <location>
        <begin position="1"/>
        <end position="421"/>
    </location>
</feature>
<sequence>MFMGLDGFEWWTGVVEDRTTDPLKLGRIKVRMIGLHPDKKSSEQGIRTEELLWVHPMQSLDNAAMNGIGNAPIGVVEGTWVFGFFRDKLRQDAVAMGVLPGIPEDLPNGSVGFNDPNEKYPLADKLNEPDTNRLARNDVDPDVYDESQSQTAFDNGEAPYVYRPHPIIASKRAAEEKEIPLAGYNAEGPKYDEKGTPYAAQYPYNHVRESESGHIHEIDDTEGAERLHTYHRTGTFEEIHPDGSRVTKIIGDDFEIVHKNQNVYIKGNLNITVVGDATFYCQQNVTQQIDGDLKQHVKGNVDQHVEMNVTQTVDKDVTQVVHQNVTQTVDMNVTQTVHQNVTQTVDGDVNQTVGGNVQSNVTGDYTQNISGNYTITVGGSMSESVSSSYTRSAASISDDGGGATLNLAGSAALDGTTVSLG</sequence>
<protein>
    <recommendedName>
        <fullName evidence="3">Protein Gp5</fullName>
    </recommendedName>
</protein>